<sequence length="156" mass="17604">MPRRRVIGQRKILPDPKFGSELLAKFVNILMVDGKKSTAESIVYSALETLAQRSGKSELEAFEVALENVRPTVEVKSRRVGGSTYQVPVEVRPVRRNALAMRWIVEAARKRGDKSMALRLANELSDAAENKGTAVKKREDVHRMAEANKAFAHYRW</sequence>
<feature type="chain" id="PRO_1000125942" description="Small ribosomal subunit protein uS7">
    <location>
        <begin position="1"/>
        <end position="156"/>
    </location>
</feature>
<evidence type="ECO:0000255" key="1">
    <source>
        <dbReference type="HAMAP-Rule" id="MF_00480"/>
    </source>
</evidence>
<evidence type="ECO:0000305" key="2"/>
<gene>
    <name evidence="1" type="primary">rpsG</name>
    <name type="ordered locus">ECSE_3602</name>
</gene>
<organism>
    <name type="scientific">Escherichia coli (strain SE11)</name>
    <dbReference type="NCBI Taxonomy" id="409438"/>
    <lineage>
        <taxon>Bacteria</taxon>
        <taxon>Pseudomonadati</taxon>
        <taxon>Pseudomonadota</taxon>
        <taxon>Gammaproteobacteria</taxon>
        <taxon>Enterobacterales</taxon>
        <taxon>Enterobacteriaceae</taxon>
        <taxon>Escherichia</taxon>
    </lineage>
</organism>
<name>RS7_ECOSE</name>
<comment type="function">
    <text evidence="1">One of the primary rRNA binding proteins, it binds directly to 16S rRNA where it nucleates assembly of the head domain of the 30S subunit. Is located at the subunit interface close to the decoding center, probably blocks exit of the E-site tRNA.</text>
</comment>
<comment type="subunit">
    <text evidence="1">Part of the 30S ribosomal subunit. Contacts proteins S9 and S11.</text>
</comment>
<comment type="similarity">
    <text evidence="1">Belongs to the universal ribosomal protein uS7 family.</text>
</comment>
<proteinExistence type="inferred from homology"/>
<keyword id="KW-0687">Ribonucleoprotein</keyword>
<keyword id="KW-0689">Ribosomal protein</keyword>
<keyword id="KW-0694">RNA-binding</keyword>
<keyword id="KW-0699">rRNA-binding</keyword>
<keyword id="KW-0820">tRNA-binding</keyword>
<reference key="1">
    <citation type="journal article" date="2008" name="DNA Res.">
        <title>Complete genome sequence and comparative analysis of the wild-type commensal Escherichia coli strain SE11 isolated from a healthy adult.</title>
        <authorList>
            <person name="Oshima K."/>
            <person name="Toh H."/>
            <person name="Ogura Y."/>
            <person name="Sasamoto H."/>
            <person name="Morita H."/>
            <person name="Park S.-H."/>
            <person name="Ooka T."/>
            <person name="Iyoda S."/>
            <person name="Taylor T.D."/>
            <person name="Hayashi T."/>
            <person name="Itoh K."/>
            <person name="Hattori M."/>
        </authorList>
    </citation>
    <scope>NUCLEOTIDE SEQUENCE [LARGE SCALE GENOMIC DNA]</scope>
    <source>
        <strain>SE11</strain>
    </source>
</reference>
<dbReference type="EMBL" id="AP009240">
    <property type="protein sequence ID" value="BAG79126.1"/>
    <property type="molecule type" value="Genomic_DNA"/>
</dbReference>
<dbReference type="RefSeq" id="WP_001138043.1">
    <property type="nucleotide sequence ID" value="NC_011415.1"/>
</dbReference>
<dbReference type="SMR" id="B6I241"/>
<dbReference type="GeneID" id="93778657"/>
<dbReference type="KEGG" id="ecy:ECSE_3602"/>
<dbReference type="HOGENOM" id="CLU_072226_1_1_6"/>
<dbReference type="Proteomes" id="UP000008199">
    <property type="component" value="Chromosome"/>
</dbReference>
<dbReference type="GO" id="GO:0015935">
    <property type="term" value="C:small ribosomal subunit"/>
    <property type="evidence" value="ECO:0007669"/>
    <property type="project" value="InterPro"/>
</dbReference>
<dbReference type="GO" id="GO:0019843">
    <property type="term" value="F:rRNA binding"/>
    <property type="evidence" value="ECO:0007669"/>
    <property type="project" value="UniProtKB-UniRule"/>
</dbReference>
<dbReference type="GO" id="GO:0003735">
    <property type="term" value="F:structural constituent of ribosome"/>
    <property type="evidence" value="ECO:0007669"/>
    <property type="project" value="InterPro"/>
</dbReference>
<dbReference type="GO" id="GO:0000049">
    <property type="term" value="F:tRNA binding"/>
    <property type="evidence" value="ECO:0007669"/>
    <property type="project" value="UniProtKB-UniRule"/>
</dbReference>
<dbReference type="GO" id="GO:0006412">
    <property type="term" value="P:translation"/>
    <property type="evidence" value="ECO:0007669"/>
    <property type="project" value="UniProtKB-UniRule"/>
</dbReference>
<dbReference type="CDD" id="cd14869">
    <property type="entry name" value="uS7_Bacteria"/>
    <property type="match status" value="1"/>
</dbReference>
<dbReference type="FunFam" id="1.10.455.10:FF:000001">
    <property type="entry name" value="30S ribosomal protein S7"/>
    <property type="match status" value="1"/>
</dbReference>
<dbReference type="Gene3D" id="1.10.455.10">
    <property type="entry name" value="Ribosomal protein S7 domain"/>
    <property type="match status" value="1"/>
</dbReference>
<dbReference type="HAMAP" id="MF_00480_B">
    <property type="entry name" value="Ribosomal_uS7_B"/>
    <property type="match status" value="1"/>
</dbReference>
<dbReference type="InterPro" id="IPR000235">
    <property type="entry name" value="Ribosomal_uS7"/>
</dbReference>
<dbReference type="InterPro" id="IPR005717">
    <property type="entry name" value="Ribosomal_uS7_bac/org-type"/>
</dbReference>
<dbReference type="InterPro" id="IPR020606">
    <property type="entry name" value="Ribosomal_uS7_CS"/>
</dbReference>
<dbReference type="InterPro" id="IPR023798">
    <property type="entry name" value="Ribosomal_uS7_dom"/>
</dbReference>
<dbReference type="InterPro" id="IPR036823">
    <property type="entry name" value="Ribosomal_uS7_dom_sf"/>
</dbReference>
<dbReference type="NCBIfam" id="TIGR01029">
    <property type="entry name" value="rpsG_bact"/>
    <property type="match status" value="1"/>
</dbReference>
<dbReference type="PANTHER" id="PTHR11205">
    <property type="entry name" value="RIBOSOMAL PROTEIN S7"/>
    <property type="match status" value="1"/>
</dbReference>
<dbReference type="Pfam" id="PF00177">
    <property type="entry name" value="Ribosomal_S7"/>
    <property type="match status" value="1"/>
</dbReference>
<dbReference type="PIRSF" id="PIRSF002122">
    <property type="entry name" value="RPS7p_RPS7a_RPS5e_RPS7o"/>
    <property type="match status" value="1"/>
</dbReference>
<dbReference type="SUPFAM" id="SSF47973">
    <property type="entry name" value="Ribosomal protein S7"/>
    <property type="match status" value="1"/>
</dbReference>
<dbReference type="PROSITE" id="PS00052">
    <property type="entry name" value="RIBOSOMAL_S7"/>
    <property type="match status" value="1"/>
</dbReference>
<protein>
    <recommendedName>
        <fullName evidence="1">Small ribosomal subunit protein uS7</fullName>
    </recommendedName>
    <alternativeName>
        <fullName evidence="2">30S ribosomal protein S7</fullName>
    </alternativeName>
</protein>
<accession>B6I241</accession>